<reference key="1">
    <citation type="journal article" date="1997" name="Yeast">
        <title>The sequence of a 54.7 kb fragment of yeast chromosome XV reveals the presence of two tRNAs and 24 new open reading frames.</title>
        <authorList>
            <person name="Valens M."/>
            <person name="Bohn C."/>
            <person name="Daignan-Fornier B."/>
            <person name="Dang V.-D."/>
            <person name="Bolotin-Fukuhara M."/>
        </authorList>
    </citation>
    <scope>NUCLEOTIDE SEQUENCE [GENOMIC DNA]</scope>
</reference>
<reference key="2">
    <citation type="journal article" date="1997" name="Nature">
        <title>The nucleotide sequence of Saccharomyces cerevisiae chromosome XV.</title>
        <authorList>
            <person name="Dujon B."/>
            <person name="Albermann K."/>
            <person name="Aldea M."/>
            <person name="Alexandraki D."/>
            <person name="Ansorge W."/>
            <person name="Arino J."/>
            <person name="Benes V."/>
            <person name="Bohn C."/>
            <person name="Bolotin-Fukuhara M."/>
            <person name="Bordonne R."/>
            <person name="Boyer J."/>
            <person name="Camasses A."/>
            <person name="Casamayor A."/>
            <person name="Casas C."/>
            <person name="Cheret G."/>
            <person name="Cziepluch C."/>
            <person name="Daignan-Fornier B."/>
            <person name="Dang V.-D."/>
            <person name="de Haan M."/>
            <person name="Delius H."/>
            <person name="Durand P."/>
            <person name="Fairhead C."/>
            <person name="Feldmann H."/>
            <person name="Gaillon L."/>
            <person name="Galisson F."/>
            <person name="Gamo F.-J."/>
            <person name="Gancedo C."/>
            <person name="Goffeau A."/>
            <person name="Goulding S.E."/>
            <person name="Grivell L.A."/>
            <person name="Habbig B."/>
            <person name="Hand N.J."/>
            <person name="Hani J."/>
            <person name="Hattenhorst U."/>
            <person name="Hebling U."/>
            <person name="Hernando Y."/>
            <person name="Herrero E."/>
            <person name="Heumann K."/>
            <person name="Hiesel R."/>
            <person name="Hilger F."/>
            <person name="Hofmann B."/>
            <person name="Hollenberg C.P."/>
            <person name="Hughes B."/>
            <person name="Jauniaux J.-C."/>
            <person name="Kalogeropoulos A."/>
            <person name="Katsoulou C."/>
            <person name="Kordes E."/>
            <person name="Lafuente M.J."/>
            <person name="Landt O."/>
            <person name="Louis E.J."/>
            <person name="Maarse A.C."/>
            <person name="Madania A."/>
            <person name="Mannhaupt G."/>
            <person name="Marck C."/>
            <person name="Martin R.P."/>
            <person name="Mewes H.-W."/>
            <person name="Michaux G."/>
            <person name="Paces V."/>
            <person name="Parle-McDermott A.G."/>
            <person name="Pearson B.M."/>
            <person name="Perrin A."/>
            <person name="Pettersson B."/>
            <person name="Poch O."/>
            <person name="Pohl T.M."/>
            <person name="Poirey R."/>
            <person name="Portetelle D."/>
            <person name="Pujol A."/>
            <person name="Purnelle B."/>
            <person name="Ramezani Rad M."/>
            <person name="Rechmann S."/>
            <person name="Schwager C."/>
            <person name="Schweizer M."/>
            <person name="Sor F."/>
            <person name="Sterky F."/>
            <person name="Tarassov I.A."/>
            <person name="Teodoru C."/>
            <person name="Tettelin H."/>
            <person name="Thierry A."/>
            <person name="Tobiasch E."/>
            <person name="Tzermia M."/>
            <person name="Uhlen M."/>
            <person name="Unseld M."/>
            <person name="Valens M."/>
            <person name="Vandenbol M."/>
            <person name="Vetter I."/>
            <person name="Vlcek C."/>
            <person name="Voet M."/>
            <person name="Volckaert G."/>
            <person name="Voss H."/>
            <person name="Wambutt R."/>
            <person name="Wedler H."/>
            <person name="Wiemann S."/>
            <person name="Winsor B."/>
            <person name="Wolfe K.H."/>
            <person name="Zollner A."/>
            <person name="Zumstein E."/>
            <person name="Kleine K."/>
        </authorList>
    </citation>
    <scope>NUCLEOTIDE SEQUENCE [LARGE SCALE GENOMIC DNA]</scope>
    <source>
        <strain>ATCC 204508 / S288c</strain>
    </source>
</reference>
<reference key="3">
    <citation type="journal article" date="2014" name="G3 (Bethesda)">
        <title>The reference genome sequence of Saccharomyces cerevisiae: Then and now.</title>
        <authorList>
            <person name="Engel S.R."/>
            <person name="Dietrich F.S."/>
            <person name="Fisk D.G."/>
            <person name="Binkley G."/>
            <person name="Balakrishnan R."/>
            <person name="Costanzo M.C."/>
            <person name="Dwight S.S."/>
            <person name="Hitz B.C."/>
            <person name="Karra K."/>
            <person name="Nash R.S."/>
            <person name="Weng S."/>
            <person name="Wong E.D."/>
            <person name="Lloyd P."/>
            <person name="Skrzypek M.S."/>
            <person name="Miyasato S.R."/>
            <person name="Simison M."/>
            <person name="Cherry J.M."/>
        </authorList>
    </citation>
    <scope>GENOME REANNOTATION</scope>
    <source>
        <strain>ATCC 204508 / S288c</strain>
    </source>
</reference>
<reference key="4">
    <citation type="journal article" date="1990" name="Mol. Cell. Biol.">
        <title>Isolation, sequencing, and disruption of the yeast CKA2 gene: casein kinase II is essential for viability in Saccharomyces cerevisiae.</title>
        <authorList>
            <person name="Padmanabha R."/>
            <person name="Chen-Wu J.L.-P."/>
            <person name="Hanna D.E."/>
            <person name="Glover C.V.C."/>
        </authorList>
    </citation>
    <scope>NUCLEOTIDE SEQUENCE [GENOMIC DNA] OF 43-268</scope>
</reference>
<reference key="5">
    <citation type="journal article" date="2003" name="Nature">
        <title>Global analysis of protein expression in yeast.</title>
        <authorList>
            <person name="Ghaemmaghami S."/>
            <person name="Huh W.-K."/>
            <person name="Bower K."/>
            <person name="Howson R.W."/>
            <person name="Belle A."/>
            <person name="Dephoure N."/>
            <person name="O'Shea E.K."/>
            <person name="Weissman J.S."/>
        </authorList>
    </citation>
    <scope>LEVEL OF PROTEIN EXPRESSION [LARGE SCALE ANALYSIS]</scope>
</reference>
<accession>P36025</accession>
<accession>D6W2C5</accession>
<accession>O00024</accession>
<accession>Q08458</accession>
<organism>
    <name type="scientific">Saccharomyces cerevisiae (strain ATCC 204508 / S288c)</name>
    <name type="common">Baker's yeast</name>
    <dbReference type="NCBI Taxonomy" id="559292"/>
    <lineage>
        <taxon>Eukaryota</taxon>
        <taxon>Fungi</taxon>
        <taxon>Dikarya</taxon>
        <taxon>Ascomycota</taxon>
        <taxon>Saccharomycotina</taxon>
        <taxon>Saccharomycetes</taxon>
        <taxon>Saccharomycetales</taxon>
        <taxon>Saccharomycetaceae</taxon>
        <taxon>Saccharomyces</taxon>
    </lineage>
</organism>
<feature type="chain" id="PRO_0000203490" description="Uncharacterized protein YOR062C">
    <location>
        <begin position="1"/>
        <end position="268"/>
    </location>
</feature>
<feature type="sequence conflict" description="In Ref. 4; M33759." evidence="2" ref="4">
    <original>A</original>
    <variation>G</variation>
    <location>
        <position position="154"/>
    </location>
</feature>
<feature type="sequence conflict" description="In Ref. 4; M33759." evidence="2" ref="4">
    <original>P</original>
    <variation>L</variation>
    <location>
        <position position="236"/>
    </location>
</feature>
<dbReference type="EMBL" id="Z70678">
    <property type="protein sequence ID" value="CAA94547.1"/>
    <property type="molecule type" value="Genomic_DNA"/>
</dbReference>
<dbReference type="EMBL" id="Z74970">
    <property type="protein sequence ID" value="CAA99255.1"/>
    <property type="molecule type" value="Genomic_DNA"/>
</dbReference>
<dbReference type="EMBL" id="M33759">
    <property type="status" value="NOT_ANNOTATED_CDS"/>
    <property type="molecule type" value="Genomic_DNA"/>
</dbReference>
<dbReference type="EMBL" id="BK006948">
    <property type="protein sequence ID" value="DAA10841.1"/>
    <property type="molecule type" value="Genomic_DNA"/>
</dbReference>
<dbReference type="PIR" id="S66945">
    <property type="entry name" value="S66945"/>
</dbReference>
<dbReference type="BioGRID" id="34461">
    <property type="interactions" value="55"/>
</dbReference>
<dbReference type="DIP" id="DIP-1608N"/>
<dbReference type="FunCoup" id="P36025">
    <property type="interactions" value="63"/>
</dbReference>
<dbReference type="IntAct" id="P36025">
    <property type="interactions" value="4"/>
</dbReference>
<dbReference type="MINT" id="P36025"/>
<dbReference type="STRING" id="4932.YOR062C"/>
<dbReference type="BindingDB" id="P36025"/>
<dbReference type="iPTMnet" id="P36025"/>
<dbReference type="PaxDb" id="4932-YOR062C"/>
<dbReference type="PeptideAtlas" id="P36025"/>
<dbReference type="EnsemblFungi" id="YOR062C_mRNA">
    <property type="protein sequence ID" value="YOR062C"/>
    <property type="gene ID" value="YOR062C"/>
</dbReference>
<dbReference type="GeneID" id="854228"/>
<dbReference type="KEGG" id="sce:YOR062C"/>
<dbReference type="AGR" id="SGD:S000005588"/>
<dbReference type="SGD" id="S000005588">
    <property type="gene designation" value="YOR062C"/>
</dbReference>
<dbReference type="VEuPathDB" id="FungiDB:YOR062C"/>
<dbReference type="eggNOG" id="ENOG502RYV2">
    <property type="taxonomic scope" value="Eukaryota"/>
</dbReference>
<dbReference type="GeneTree" id="ENSGT00940000176469"/>
<dbReference type="HOGENOM" id="CLU_058084_0_0_1"/>
<dbReference type="InParanoid" id="P36025"/>
<dbReference type="OMA" id="YSIYMAR"/>
<dbReference type="OrthoDB" id="5563539at2759"/>
<dbReference type="BioCyc" id="YEAST:G3O-33602-MONOMER"/>
<dbReference type="BioGRID-ORCS" id="854228">
    <property type="hits" value="0 hits in 10 CRISPR screens"/>
</dbReference>
<dbReference type="PRO" id="PR:P36025"/>
<dbReference type="Proteomes" id="UP000002311">
    <property type="component" value="Chromosome XV"/>
</dbReference>
<dbReference type="RNAct" id="P36025">
    <property type="molecule type" value="protein"/>
</dbReference>
<dbReference type="GO" id="GO:0005737">
    <property type="term" value="C:cytoplasm"/>
    <property type="evidence" value="ECO:0007005"/>
    <property type="project" value="SGD"/>
</dbReference>
<dbReference type="GO" id="GO:0005634">
    <property type="term" value="C:nucleus"/>
    <property type="evidence" value="ECO:0007005"/>
    <property type="project" value="SGD"/>
</dbReference>
<dbReference type="GO" id="GO:0005773">
    <property type="term" value="C:vacuole"/>
    <property type="evidence" value="ECO:0007669"/>
    <property type="project" value="GOC"/>
</dbReference>
<dbReference type="GO" id="GO:0042149">
    <property type="term" value="P:cellular response to glucose starvation"/>
    <property type="evidence" value="ECO:0000318"/>
    <property type="project" value="GO_Central"/>
</dbReference>
<dbReference type="GO" id="GO:0007039">
    <property type="term" value="P:protein catabolic process in the vacuole"/>
    <property type="evidence" value="ECO:0000318"/>
    <property type="project" value="GO_Central"/>
</dbReference>
<dbReference type="InterPro" id="IPR052292">
    <property type="entry name" value="Glucose_repression_reg"/>
</dbReference>
<dbReference type="PANTHER" id="PTHR28051">
    <property type="entry name" value="PROTEIN MTL1-RELATED"/>
    <property type="match status" value="1"/>
</dbReference>
<dbReference type="PANTHER" id="PTHR28051:SF1">
    <property type="entry name" value="PROTEIN MTL1-RELATED"/>
    <property type="match status" value="1"/>
</dbReference>
<protein>
    <recommendedName>
        <fullName>Uncharacterized protein YOR062C</fullName>
    </recommendedName>
</protein>
<proteinExistence type="evidence at protein level"/>
<name>YO062_YEAST</name>
<gene>
    <name type="ordered locus">YOR062C</name>
    <name type="ORF">YOR29-13</name>
</gene>
<sequence>MTSLDDSVLTKKNIALLDNATNYIRPAIDYFHFKFNYDSLDVSTTWRLLLKMRKHKLLRLPSCSSENEFDYSIYMARLYHCIWRRWSIKHFNLDEYKIDPLSINWNKEIDVTVLYGPDLVGIHEREQPTPTDFPMGNIKEQGKQLLDVRKEGSASSLLKKGSVFYSKGKWLSQRSISFDDTVRRRDIDKRGRFRESCVLINDVEQFQNYSIVWDESRHRYRRQALPDTYDYEHLYPNGDETPRNTPHDNIIIHQNLHSITEGSYIYIK</sequence>
<keyword id="KW-1185">Reference proteome</keyword>
<evidence type="ECO:0000269" key="1">
    <source>
    </source>
</evidence>
<evidence type="ECO:0000305" key="2"/>
<comment type="miscellaneous">
    <text evidence="1">Present with 2010 molecules/cell in log phase SD medium.</text>
</comment>
<comment type="similarity">
    <text evidence="2">To yeast YKR075c.</text>
</comment>